<accession>Q166E3</accession>
<organism>
    <name type="scientific">Roseobacter denitrificans (strain ATCC 33942 / OCh 114)</name>
    <name type="common">Erythrobacter sp. (strain OCh 114)</name>
    <name type="synonym">Roseobacter denitrificans</name>
    <dbReference type="NCBI Taxonomy" id="375451"/>
    <lineage>
        <taxon>Bacteria</taxon>
        <taxon>Pseudomonadati</taxon>
        <taxon>Pseudomonadota</taxon>
        <taxon>Alphaproteobacteria</taxon>
        <taxon>Rhodobacterales</taxon>
        <taxon>Roseobacteraceae</taxon>
        <taxon>Roseobacter</taxon>
    </lineage>
</organism>
<proteinExistence type="inferred from homology"/>
<gene>
    <name evidence="1" type="primary">mnmA</name>
    <name type="ordered locus">RD1_2599</name>
</gene>
<name>MNMA_ROSDO</name>
<comment type="function">
    <text evidence="1">Catalyzes the 2-thiolation of uridine at the wobble position (U34) of tRNA, leading to the formation of s(2)U34.</text>
</comment>
<comment type="catalytic activity">
    <reaction evidence="1">
        <text>S-sulfanyl-L-cysteinyl-[protein] + uridine(34) in tRNA + AH2 + ATP = 2-thiouridine(34) in tRNA + L-cysteinyl-[protein] + A + AMP + diphosphate + H(+)</text>
        <dbReference type="Rhea" id="RHEA:47032"/>
        <dbReference type="Rhea" id="RHEA-COMP:10131"/>
        <dbReference type="Rhea" id="RHEA-COMP:11726"/>
        <dbReference type="Rhea" id="RHEA-COMP:11727"/>
        <dbReference type="Rhea" id="RHEA-COMP:11728"/>
        <dbReference type="ChEBI" id="CHEBI:13193"/>
        <dbReference type="ChEBI" id="CHEBI:15378"/>
        <dbReference type="ChEBI" id="CHEBI:17499"/>
        <dbReference type="ChEBI" id="CHEBI:29950"/>
        <dbReference type="ChEBI" id="CHEBI:30616"/>
        <dbReference type="ChEBI" id="CHEBI:33019"/>
        <dbReference type="ChEBI" id="CHEBI:61963"/>
        <dbReference type="ChEBI" id="CHEBI:65315"/>
        <dbReference type="ChEBI" id="CHEBI:87170"/>
        <dbReference type="ChEBI" id="CHEBI:456215"/>
        <dbReference type="EC" id="2.8.1.13"/>
    </reaction>
</comment>
<comment type="subcellular location">
    <subcellularLocation>
        <location evidence="1">Cytoplasm</location>
    </subcellularLocation>
</comment>
<comment type="similarity">
    <text evidence="1">Belongs to the MnmA/TRMU family.</text>
</comment>
<reference key="1">
    <citation type="journal article" date="2007" name="J. Bacteriol.">
        <title>The complete genome sequence of Roseobacter denitrificans reveals a mixotrophic rather than photosynthetic metabolism.</title>
        <authorList>
            <person name="Swingley W.D."/>
            <person name="Sadekar S."/>
            <person name="Mastrian S.D."/>
            <person name="Matthies H.J."/>
            <person name="Hao J."/>
            <person name="Ramos H."/>
            <person name="Acharya C.R."/>
            <person name="Conrad A.L."/>
            <person name="Taylor H.L."/>
            <person name="Dejesa L.C."/>
            <person name="Shah M.K."/>
            <person name="O'Huallachain M.E."/>
            <person name="Lince M.T."/>
            <person name="Blankenship R.E."/>
            <person name="Beatty J.T."/>
            <person name="Touchman J.W."/>
        </authorList>
    </citation>
    <scope>NUCLEOTIDE SEQUENCE [LARGE SCALE GENOMIC DNA]</scope>
    <source>
        <strain>ATCC 33942 / OCh 114</strain>
    </source>
</reference>
<dbReference type="EC" id="2.8.1.13" evidence="1"/>
<dbReference type="EMBL" id="CP000362">
    <property type="protein sequence ID" value="ABG32150.1"/>
    <property type="molecule type" value="Genomic_DNA"/>
</dbReference>
<dbReference type="RefSeq" id="WP_011568767.1">
    <property type="nucleotide sequence ID" value="NC_008209.1"/>
</dbReference>
<dbReference type="SMR" id="Q166E3"/>
<dbReference type="STRING" id="375451.RD1_2599"/>
<dbReference type="KEGG" id="rde:RD1_2599"/>
<dbReference type="eggNOG" id="COG0482">
    <property type="taxonomic scope" value="Bacteria"/>
</dbReference>
<dbReference type="HOGENOM" id="CLU_035188_0_0_5"/>
<dbReference type="OrthoDB" id="9800696at2"/>
<dbReference type="Proteomes" id="UP000007029">
    <property type="component" value="Chromosome"/>
</dbReference>
<dbReference type="GO" id="GO:0005737">
    <property type="term" value="C:cytoplasm"/>
    <property type="evidence" value="ECO:0007669"/>
    <property type="project" value="UniProtKB-SubCell"/>
</dbReference>
<dbReference type="GO" id="GO:0005524">
    <property type="term" value="F:ATP binding"/>
    <property type="evidence" value="ECO:0007669"/>
    <property type="project" value="UniProtKB-KW"/>
</dbReference>
<dbReference type="GO" id="GO:0000049">
    <property type="term" value="F:tRNA binding"/>
    <property type="evidence" value="ECO:0007669"/>
    <property type="project" value="UniProtKB-KW"/>
</dbReference>
<dbReference type="GO" id="GO:0103016">
    <property type="term" value="F:tRNA-uridine 2-sulfurtransferase activity"/>
    <property type="evidence" value="ECO:0007669"/>
    <property type="project" value="UniProtKB-EC"/>
</dbReference>
<dbReference type="GO" id="GO:0002143">
    <property type="term" value="P:tRNA wobble position uridine thiolation"/>
    <property type="evidence" value="ECO:0007669"/>
    <property type="project" value="TreeGrafter"/>
</dbReference>
<dbReference type="CDD" id="cd01998">
    <property type="entry name" value="MnmA_TRMU-like"/>
    <property type="match status" value="1"/>
</dbReference>
<dbReference type="FunFam" id="2.30.30.280:FF:000001">
    <property type="entry name" value="tRNA-specific 2-thiouridylase MnmA"/>
    <property type="match status" value="1"/>
</dbReference>
<dbReference type="FunFam" id="3.40.50.620:FF:000115">
    <property type="entry name" value="tRNA-specific 2-thiouridylase MnmA"/>
    <property type="match status" value="1"/>
</dbReference>
<dbReference type="Gene3D" id="2.30.30.280">
    <property type="entry name" value="Adenine nucleotide alpha hydrolases-like domains"/>
    <property type="match status" value="1"/>
</dbReference>
<dbReference type="Gene3D" id="3.40.50.620">
    <property type="entry name" value="HUPs"/>
    <property type="match status" value="1"/>
</dbReference>
<dbReference type="Gene3D" id="2.40.30.10">
    <property type="entry name" value="Translation factors"/>
    <property type="match status" value="1"/>
</dbReference>
<dbReference type="HAMAP" id="MF_00144">
    <property type="entry name" value="tRNA_thiouridyl_MnmA"/>
    <property type="match status" value="1"/>
</dbReference>
<dbReference type="InterPro" id="IPR004506">
    <property type="entry name" value="MnmA-like"/>
</dbReference>
<dbReference type="InterPro" id="IPR046885">
    <property type="entry name" value="MnmA-like_C"/>
</dbReference>
<dbReference type="InterPro" id="IPR046884">
    <property type="entry name" value="MnmA-like_central"/>
</dbReference>
<dbReference type="InterPro" id="IPR023382">
    <property type="entry name" value="MnmA-like_central_sf"/>
</dbReference>
<dbReference type="InterPro" id="IPR014729">
    <property type="entry name" value="Rossmann-like_a/b/a_fold"/>
</dbReference>
<dbReference type="NCBIfam" id="NF001138">
    <property type="entry name" value="PRK00143.1"/>
    <property type="match status" value="1"/>
</dbReference>
<dbReference type="NCBIfam" id="TIGR00420">
    <property type="entry name" value="trmU"/>
    <property type="match status" value="1"/>
</dbReference>
<dbReference type="PANTHER" id="PTHR11933:SF5">
    <property type="entry name" value="MITOCHONDRIAL TRNA-SPECIFIC 2-THIOURIDYLASE 1"/>
    <property type="match status" value="1"/>
</dbReference>
<dbReference type="PANTHER" id="PTHR11933">
    <property type="entry name" value="TRNA 5-METHYLAMINOMETHYL-2-THIOURIDYLATE -METHYLTRANSFERASE"/>
    <property type="match status" value="1"/>
</dbReference>
<dbReference type="Pfam" id="PF03054">
    <property type="entry name" value="tRNA_Me_trans"/>
    <property type="match status" value="1"/>
</dbReference>
<dbReference type="Pfam" id="PF20258">
    <property type="entry name" value="tRNA_Me_trans_C"/>
    <property type="match status" value="1"/>
</dbReference>
<dbReference type="Pfam" id="PF20259">
    <property type="entry name" value="tRNA_Me_trans_M"/>
    <property type="match status" value="1"/>
</dbReference>
<dbReference type="SUPFAM" id="SSF52402">
    <property type="entry name" value="Adenine nucleotide alpha hydrolases-like"/>
    <property type="match status" value="1"/>
</dbReference>
<evidence type="ECO:0000255" key="1">
    <source>
        <dbReference type="HAMAP-Rule" id="MF_00144"/>
    </source>
</evidence>
<protein>
    <recommendedName>
        <fullName evidence="1">tRNA-specific 2-thiouridylase MnmA</fullName>
        <ecNumber evidence="1">2.8.1.13</ecNumber>
    </recommendedName>
</protein>
<keyword id="KW-0067">ATP-binding</keyword>
<keyword id="KW-0963">Cytoplasm</keyword>
<keyword id="KW-1015">Disulfide bond</keyword>
<keyword id="KW-0547">Nucleotide-binding</keyword>
<keyword id="KW-1185">Reference proteome</keyword>
<keyword id="KW-0694">RNA-binding</keyword>
<keyword id="KW-0808">Transferase</keyword>
<keyword id="KW-0819">tRNA processing</keyword>
<keyword id="KW-0820">tRNA-binding</keyword>
<sequence>MPLDPSPTLNSLGFAKPPAETRVVVAMSGGVDSSVVAAMLAEEGYDVVGVTLQLYDHGAALAKKGACCAGLDIHDARRVSEKMGFPHYVLDYENIFKDAVIDEFAESYLGGATPVPCIRCNERVKFKDLLETAKDLDADCMATGHYIQRKSGPYGAELHSAADANRDQSYFLFSTTPEQLAFLRFPLGHLPSKEDTRALAEKYGLSVANKPDSQDICFVPDGDYASVIRKLRPEAAAPGDIVDTDGRVLARHDGVVNYTIGQRRGLGIGGLATPLYVIKLDAEARQVVVGPKSMLSTRTVPVREINWLGDEPFQSRDAWHLAVKVRSTRPPTDAIIRPISDTEATVELTSPEEGISPGQACVFYDTDSSRIYGGGWIHKG</sequence>
<feature type="chain" id="PRO_0000349781" description="tRNA-specific 2-thiouridylase MnmA">
    <location>
        <begin position="1"/>
        <end position="380"/>
    </location>
</feature>
<feature type="region of interest" description="Interaction with tRNA" evidence="1">
    <location>
        <begin position="166"/>
        <end position="168"/>
    </location>
</feature>
<feature type="active site" description="Nucleophile" evidence="1">
    <location>
        <position position="120"/>
    </location>
</feature>
<feature type="active site" description="Cysteine persulfide intermediate" evidence="1">
    <location>
        <position position="217"/>
    </location>
</feature>
<feature type="binding site" evidence="1">
    <location>
        <begin position="26"/>
        <end position="33"/>
    </location>
    <ligand>
        <name>ATP</name>
        <dbReference type="ChEBI" id="CHEBI:30616"/>
    </ligand>
</feature>
<feature type="binding site" evidence="1">
    <location>
        <position position="52"/>
    </location>
    <ligand>
        <name>ATP</name>
        <dbReference type="ChEBI" id="CHEBI:30616"/>
    </ligand>
</feature>
<feature type="binding site" evidence="1">
    <location>
        <position position="144"/>
    </location>
    <ligand>
        <name>ATP</name>
        <dbReference type="ChEBI" id="CHEBI:30616"/>
    </ligand>
</feature>
<feature type="site" description="Interaction with tRNA" evidence="1">
    <location>
        <position position="145"/>
    </location>
</feature>
<feature type="site" description="Interaction with tRNA" evidence="1">
    <location>
        <position position="359"/>
    </location>
</feature>
<feature type="disulfide bond" description="Alternate" evidence="1">
    <location>
        <begin position="120"/>
        <end position="217"/>
    </location>
</feature>